<sequence length="327" mass="36934">MDGMYNFHSAGDYSDKSVLMMSPESLMFPSDYQALLCSSAGENRVSDVFGSDELLSVAVSALSSEAASIAPEIRRNDDNVSLTVIKAKIACHPSYPRLLQAYIDCQKVGAPPEIACLLEEIQRESDVYKQEVVPSSCFGADPELDEFMETYCDILVKYKSDLARPFDEATCFLNKIEMQLRNLCTGVESARGVSEDGVISSDEELSGGDHEVAEDGRQRCEDRDLKDRLLRKFGSRISTLKLEFSKKKKKGKLPREARQALLDWWNLHYKWPYPTEGDKIALADATGLDQKQINNWFINQRKRHWKPSENMPFAMMDDSSGSFFTEE</sequence>
<name>KNAT6_ARATH</name>
<gene>
    <name type="primary">KNAT6</name>
    <name type="ordered locus">At1g23380</name>
    <name type="ORF">F26F24.25</name>
    <name type="ORF">F28C11.2</name>
</gene>
<reference key="1">
    <citation type="journal article" date="2000" name="Nature">
        <title>Sequence and analysis of chromosome 1 of the plant Arabidopsis thaliana.</title>
        <authorList>
            <person name="Theologis A."/>
            <person name="Ecker J.R."/>
            <person name="Palm C.J."/>
            <person name="Federspiel N.A."/>
            <person name="Kaul S."/>
            <person name="White O."/>
            <person name="Alonso J."/>
            <person name="Altafi H."/>
            <person name="Araujo R."/>
            <person name="Bowman C.L."/>
            <person name="Brooks S.Y."/>
            <person name="Buehler E."/>
            <person name="Chan A."/>
            <person name="Chao Q."/>
            <person name="Chen H."/>
            <person name="Cheuk R.F."/>
            <person name="Chin C.W."/>
            <person name="Chung M.K."/>
            <person name="Conn L."/>
            <person name="Conway A.B."/>
            <person name="Conway A.R."/>
            <person name="Creasy T.H."/>
            <person name="Dewar K."/>
            <person name="Dunn P."/>
            <person name="Etgu P."/>
            <person name="Feldblyum T.V."/>
            <person name="Feng J.-D."/>
            <person name="Fong B."/>
            <person name="Fujii C.Y."/>
            <person name="Gill J.E."/>
            <person name="Goldsmith A.D."/>
            <person name="Haas B."/>
            <person name="Hansen N.F."/>
            <person name="Hughes B."/>
            <person name="Huizar L."/>
            <person name="Hunter J.L."/>
            <person name="Jenkins J."/>
            <person name="Johnson-Hopson C."/>
            <person name="Khan S."/>
            <person name="Khaykin E."/>
            <person name="Kim C.J."/>
            <person name="Koo H.L."/>
            <person name="Kremenetskaia I."/>
            <person name="Kurtz D.B."/>
            <person name="Kwan A."/>
            <person name="Lam B."/>
            <person name="Langin-Hooper S."/>
            <person name="Lee A."/>
            <person name="Lee J.M."/>
            <person name="Lenz C.A."/>
            <person name="Li J.H."/>
            <person name="Li Y.-P."/>
            <person name="Lin X."/>
            <person name="Liu S.X."/>
            <person name="Liu Z.A."/>
            <person name="Luros J.S."/>
            <person name="Maiti R."/>
            <person name="Marziali A."/>
            <person name="Militscher J."/>
            <person name="Miranda M."/>
            <person name="Nguyen M."/>
            <person name="Nierman W.C."/>
            <person name="Osborne B.I."/>
            <person name="Pai G."/>
            <person name="Peterson J."/>
            <person name="Pham P.K."/>
            <person name="Rizzo M."/>
            <person name="Rooney T."/>
            <person name="Rowley D."/>
            <person name="Sakano H."/>
            <person name="Salzberg S.L."/>
            <person name="Schwartz J.R."/>
            <person name="Shinn P."/>
            <person name="Southwick A.M."/>
            <person name="Sun H."/>
            <person name="Tallon L.J."/>
            <person name="Tambunga G."/>
            <person name="Toriumi M.J."/>
            <person name="Town C.D."/>
            <person name="Utterback T."/>
            <person name="Van Aken S."/>
            <person name="Vaysberg M."/>
            <person name="Vysotskaia V.S."/>
            <person name="Walker M."/>
            <person name="Wu D."/>
            <person name="Yu G."/>
            <person name="Fraser C.M."/>
            <person name="Venter J.C."/>
            <person name="Davis R.W."/>
        </authorList>
    </citation>
    <scope>NUCLEOTIDE SEQUENCE [LARGE SCALE GENOMIC DNA]</scope>
    <source>
        <strain>cv. Columbia</strain>
    </source>
</reference>
<reference key="2">
    <citation type="journal article" date="2017" name="Plant J.">
        <title>Araport11: a complete reannotation of the Arabidopsis thaliana reference genome.</title>
        <authorList>
            <person name="Cheng C.Y."/>
            <person name="Krishnakumar V."/>
            <person name="Chan A.P."/>
            <person name="Thibaud-Nissen F."/>
            <person name="Schobel S."/>
            <person name="Town C.D."/>
        </authorList>
    </citation>
    <scope>GENOME REANNOTATION</scope>
    <source>
        <strain>cv. Columbia</strain>
    </source>
</reference>
<reference key="3">
    <citation type="journal article" date="2003" name="Science">
        <title>Empirical analysis of transcriptional activity in the Arabidopsis genome.</title>
        <authorList>
            <person name="Yamada K."/>
            <person name="Lim J."/>
            <person name="Dale J.M."/>
            <person name="Chen H."/>
            <person name="Shinn P."/>
            <person name="Palm C.J."/>
            <person name="Southwick A.M."/>
            <person name="Wu H.C."/>
            <person name="Kim C.J."/>
            <person name="Nguyen M."/>
            <person name="Pham P.K."/>
            <person name="Cheuk R.F."/>
            <person name="Karlin-Newmann G."/>
            <person name="Liu S.X."/>
            <person name="Lam B."/>
            <person name="Sakano H."/>
            <person name="Wu T."/>
            <person name="Yu G."/>
            <person name="Miranda M."/>
            <person name="Quach H.L."/>
            <person name="Tripp M."/>
            <person name="Chang C.H."/>
            <person name="Lee J.M."/>
            <person name="Toriumi M.J."/>
            <person name="Chan M.M."/>
            <person name="Tang C.C."/>
            <person name="Onodera C.S."/>
            <person name="Deng J.M."/>
            <person name="Akiyama K."/>
            <person name="Ansari Y."/>
            <person name="Arakawa T."/>
            <person name="Banh J."/>
            <person name="Banno F."/>
            <person name="Bowser L."/>
            <person name="Brooks S.Y."/>
            <person name="Carninci P."/>
            <person name="Chao Q."/>
            <person name="Choy N."/>
            <person name="Enju A."/>
            <person name="Goldsmith A.D."/>
            <person name="Gurjal M."/>
            <person name="Hansen N.F."/>
            <person name="Hayashizaki Y."/>
            <person name="Johnson-Hopson C."/>
            <person name="Hsuan V.W."/>
            <person name="Iida K."/>
            <person name="Karnes M."/>
            <person name="Khan S."/>
            <person name="Koesema E."/>
            <person name="Ishida J."/>
            <person name="Jiang P.X."/>
            <person name="Jones T."/>
            <person name="Kawai J."/>
            <person name="Kamiya A."/>
            <person name="Meyers C."/>
            <person name="Nakajima M."/>
            <person name="Narusaka M."/>
            <person name="Seki M."/>
            <person name="Sakurai T."/>
            <person name="Satou M."/>
            <person name="Tamse R."/>
            <person name="Vaysberg M."/>
            <person name="Wallender E.K."/>
            <person name="Wong C."/>
            <person name="Yamamura Y."/>
            <person name="Yuan S."/>
            <person name="Shinozaki K."/>
            <person name="Davis R.W."/>
            <person name="Theologis A."/>
            <person name="Ecker J.R."/>
        </authorList>
    </citation>
    <scope>NUCLEOTIDE SEQUENCE [LARGE SCALE MRNA] (ISOFORM KNAT6S)</scope>
    <source>
        <strain>cv. Columbia</strain>
    </source>
</reference>
<reference key="4">
    <citation type="journal article" date="2001" name="Development">
        <title>The ASYMMETRIC LEAVES2 gene of Arabidopsis thaliana regulates formation of a symmetric lamina, establishment of venation and repression of meristem-related homeobox genes in leaves.</title>
        <authorList>
            <person name="Semiarti E."/>
            <person name="Ueno Y."/>
            <person name="Tsukaya H."/>
            <person name="Iwakawa H."/>
            <person name="Machida C."/>
            <person name="Machida Y."/>
        </authorList>
    </citation>
    <scope>NUCLEOTIDE SEQUENCE [MRNA] OF 4-327 (ISOFORMS KNAT6S AND KNAT6L)</scope>
    <scope>INDUCTION</scope>
    <scope>TISSUE SPECIFICITY</scope>
</reference>
<reference key="5">
    <citation type="journal article" date="2004" name="Gene">
        <title>VAAMANA -- a BEL1-like homeodomain protein, interacts with KNOX proteins BP and STM and regulates inflorescence stem growth in Arabidopsis.</title>
        <authorList>
            <person name="Bhatt A.M."/>
            <person name="Etchells J.P."/>
            <person name="Canales C."/>
            <person name="Lagodienko A."/>
            <person name="Dickinson H."/>
        </authorList>
    </citation>
    <scope>INTERACTION WITH BLH9/PNY</scope>
</reference>
<reference key="6">
    <citation type="journal article" date="2005" name="Proc. Natl. Acad. Sci. U.S.A.">
        <title>A central role of Arabidopsis thaliana ovate family proteins in networking and subcellular localization of 3-aa loop extension homeodomain proteins.</title>
        <authorList>
            <person name="Hackbusch J."/>
            <person name="Richter K."/>
            <person name="Muller J."/>
            <person name="Salamini F."/>
            <person name="Uhrig J.F."/>
        </authorList>
    </citation>
    <scope>INTERACTION WITH OFP2 AND OFP4</scope>
</reference>
<reference key="7">
    <citation type="journal article" date="2006" name="Plant Cell">
        <title>KNAT6: an Arabidopsis homeobox gene involved in meristem activity and organ separation.</title>
        <authorList>
            <person name="Belles-Boix E."/>
            <person name="Hamant O."/>
            <person name="Witiak S.M."/>
            <person name="Morin H."/>
            <person name="Traas J."/>
            <person name="Pautot V."/>
        </authorList>
    </citation>
    <scope>FUNCTION</scope>
    <scope>INDUCTION</scope>
    <scope>DEVELOPMENTAL STAGE</scope>
</reference>
<proteinExistence type="evidence at protein level"/>
<organism>
    <name type="scientific">Arabidopsis thaliana</name>
    <name type="common">Mouse-ear cress</name>
    <dbReference type="NCBI Taxonomy" id="3702"/>
    <lineage>
        <taxon>Eukaryota</taxon>
        <taxon>Viridiplantae</taxon>
        <taxon>Streptophyta</taxon>
        <taxon>Embryophyta</taxon>
        <taxon>Tracheophyta</taxon>
        <taxon>Spermatophyta</taxon>
        <taxon>Magnoliopsida</taxon>
        <taxon>eudicotyledons</taxon>
        <taxon>Gunneridae</taxon>
        <taxon>Pentapetalae</taxon>
        <taxon>rosids</taxon>
        <taxon>malvids</taxon>
        <taxon>Brassicales</taxon>
        <taxon>Brassicaceae</taxon>
        <taxon>Camelineae</taxon>
        <taxon>Arabidopsis</taxon>
    </lineage>
</organism>
<evidence type="ECO:0000255" key="1">
    <source>
        <dbReference type="PROSITE-ProRule" id="PRU00108"/>
    </source>
</evidence>
<evidence type="ECO:0000255" key="2">
    <source>
        <dbReference type="PROSITE-ProRule" id="PRU00559"/>
    </source>
</evidence>
<evidence type="ECO:0000269" key="3">
    <source>
    </source>
</evidence>
<evidence type="ECO:0000269" key="4">
    <source>
    </source>
</evidence>
<evidence type="ECO:0000269" key="5">
    <source>
    </source>
</evidence>
<evidence type="ECO:0000269" key="6">
    <source>
    </source>
</evidence>
<evidence type="ECO:0000303" key="7">
    <source>
    </source>
</evidence>
<evidence type="ECO:0000305" key="8"/>
<dbReference type="EMBL" id="AC005292">
    <property type="protein sequence ID" value="AAF87007.1"/>
    <property type="status" value="ALT_INIT"/>
    <property type="molecule type" value="Genomic_DNA"/>
</dbReference>
<dbReference type="EMBL" id="AC007945">
    <property type="protein sequence ID" value="AAF79598.1"/>
    <property type="status" value="ALT_SEQ"/>
    <property type="molecule type" value="Genomic_DNA"/>
</dbReference>
<dbReference type="EMBL" id="CP002684">
    <property type="protein sequence ID" value="AEE30380.1"/>
    <property type="molecule type" value="Genomic_DNA"/>
</dbReference>
<dbReference type="EMBL" id="CP002684">
    <property type="protein sequence ID" value="AEE30381.1"/>
    <property type="molecule type" value="Genomic_DNA"/>
</dbReference>
<dbReference type="EMBL" id="BT002930">
    <property type="protein sequence ID" value="AAO22744.1"/>
    <property type="molecule type" value="mRNA"/>
</dbReference>
<dbReference type="EMBL" id="BT004370">
    <property type="protein sequence ID" value="AAO42364.1"/>
    <property type="molecule type" value="mRNA"/>
</dbReference>
<dbReference type="EMBL" id="AB072361">
    <property type="protein sequence ID" value="BAB69678.1"/>
    <property type="molecule type" value="mRNA"/>
</dbReference>
<dbReference type="EMBL" id="AB072362">
    <property type="protein sequence ID" value="BAB69679.1"/>
    <property type="molecule type" value="mRNA"/>
</dbReference>
<dbReference type="RefSeq" id="NP_173752.3">
    <molecule id="Q84JS6-2"/>
    <property type="nucleotide sequence ID" value="NM_102187.4"/>
</dbReference>
<dbReference type="RefSeq" id="NP_850951.2">
    <molecule id="Q84JS6-1"/>
    <property type="nucleotide sequence ID" value="NM_180620.3"/>
</dbReference>
<dbReference type="SMR" id="Q84JS6"/>
<dbReference type="BioGRID" id="24185">
    <property type="interactions" value="18"/>
</dbReference>
<dbReference type="FunCoup" id="Q84JS6">
    <property type="interactions" value="275"/>
</dbReference>
<dbReference type="IntAct" id="Q84JS6">
    <property type="interactions" value="25"/>
</dbReference>
<dbReference type="STRING" id="3702.Q84JS6"/>
<dbReference type="GlyGen" id="Q84JS6">
    <property type="glycosylation" value="1 site"/>
</dbReference>
<dbReference type="iPTMnet" id="Q84JS6"/>
<dbReference type="PaxDb" id="3702-AT1G23380.2"/>
<dbReference type="ProteomicsDB" id="237120">
    <molecule id="Q84JS6-1"/>
</dbReference>
<dbReference type="EnsemblPlants" id="AT1G23380.1">
    <molecule id="Q84JS6-1"/>
    <property type="protein sequence ID" value="AT1G23380.1"/>
    <property type="gene ID" value="AT1G23380"/>
</dbReference>
<dbReference type="EnsemblPlants" id="AT1G23380.2">
    <molecule id="Q84JS6-2"/>
    <property type="protein sequence ID" value="AT1G23380.2"/>
    <property type="gene ID" value="AT1G23380"/>
</dbReference>
<dbReference type="GeneID" id="838946"/>
<dbReference type="Gramene" id="AT1G23380.1">
    <molecule id="Q84JS6-1"/>
    <property type="protein sequence ID" value="AT1G23380.1"/>
    <property type="gene ID" value="AT1G23380"/>
</dbReference>
<dbReference type="Gramene" id="AT1G23380.2">
    <molecule id="Q84JS6-2"/>
    <property type="protein sequence ID" value="AT1G23380.2"/>
    <property type="gene ID" value="AT1G23380"/>
</dbReference>
<dbReference type="KEGG" id="ath:AT1G23380"/>
<dbReference type="Araport" id="AT1G23380"/>
<dbReference type="TAIR" id="AT1G23380">
    <property type="gene designation" value="KNAT6"/>
</dbReference>
<dbReference type="eggNOG" id="KOG0773">
    <property type="taxonomic scope" value="Eukaryota"/>
</dbReference>
<dbReference type="HOGENOM" id="CLU_040111_0_1_1"/>
<dbReference type="InParanoid" id="Q84JS6"/>
<dbReference type="OMA" id="PSANMME"/>
<dbReference type="OrthoDB" id="10056939at2759"/>
<dbReference type="PhylomeDB" id="Q84JS6"/>
<dbReference type="PRO" id="PR:Q84JS6"/>
<dbReference type="Proteomes" id="UP000006548">
    <property type="component" value="Chromosome 1"/>
</dbReference>
<dbReference type="ExpressionAtlas" id="Q84JS6">
    <property type="expression patterns" value="baseline and differential"/>
</dbReference>
<dbReference type="GO" id="GO:0005634">
    <property type="term" value="C:nucleus"/>
    <property type="evidence" value="ECO:0000314"/>
    <property type="project" value="TAIR"/>
</dbReference>
<dbReference type="GO" id="GO:0003700">
    <property type="term" value="F:DNA-binding transcription factor activity"/>
    <property type="evidence" value="ECO:0000250"/>
    <property type="project" value="TAIR"/>
</dbReference>
<dbReference type="GO" id="GO:0000981">
    <property type="term" value="F:DNA-binding transcription factor activity, RNA polymerase II-specific"/>
    <property type="evidence" value="ECO:0007669"/>
    <property type="project" value="InterPro"/>
</dbReference>
<dbReference type="GO" id="GO:0000976">
    <property type="term" value="F:transcription cis-regulatory region binding"/>
    <property type="evidence" value="ECO:0000353"/>
    <property type="project" value="TAIR"/>
</dbReference>
<dbReference type="GO" id="GO:0010073">
    <property type="term" value="P:meristem maintenance"/>
    <property type="evidence" value="ECO:0000316"/>
    <property type="project" value="TAIR"/>
</dbReference>
<dbReference type="CDD" id="cd00086">
    <property type="entry name" value="homeodomain"/>
    <property type="match status" value="1"/>
</dbReference>
<dbReference type="FunFam" id="1.10.10.60:FF:000076">
    <property type="entry name" value="Homeobox protein knotted-1-like 2"/>
    <property type="match status" value="1"/>
</dbReference>
<dbReference type="Gene3D" id="1.10.10.60">
    <property type="entry name" value="Homeodomain-like"/>
    <property type="match status" value="1"/>
</dbReference>
<dbReference type="InterPro" id="IPR005539">
    <property type="entry name" value="ELK_dom"/>
</dbReference>
<dbReference type="InterPro" id="IPR001356">
    <property type="entry name" value="HD"/>
</dbReference>
<dbReference type="InterPro" id="IPR017970">
    <property type="entry name" value="Homeobox_CS"/>
</dbReference>
<dbReference type="InterPro" id="IPR009057">
    <property type="entry name" value="Homeodomain-like_sf"/>
</dbReference>
<dbReference type="InterPro" id="IPR008422">
    <property type="entry name" value="KN_HD"/>
</dbReference>
<dbReference type="InterPro" id="IPR005540">
    <property type="entry name" value="KNOX1"/>
</dbReference>
<dbReference type="InterPro" id="IPR005541">
    <property type="entry name" value="KNOX2"/>
</dbReference>
<dbReference type="InterPro" id="IPR050224">
    <property type="entry name" value="TALE_homeobox"/>
</dbReference>
<dbReference type="PANTHER" id="PTHR11850">
    <property type="entry name" value="HOMEOBOX PROTEIN TRANSCRIPTION FACTORS"/>
    <property type="match status" value="1"/>
</dbReference>
<dbReference type="Pfam" id="PF03789">
    <property type="entry name" value="ELK"/>
    <property type="match status" value="1"/>
</dbReference>
<dbReference type="Pfam" id="PF05920">
    <property type="entry name" value="Homeobox_KN"/>
    <property type="match status" value="1"/>
</dbReference>
<dbReference type="Pfam" id="PF03790">
    <property type="entry name" value="KNOX1"/>
    <property type="match status" value="1"/>
</dbReference>
<dbReference type="Pfam" id="PF03791">
    <property type="entry name" value="KNOX2"/>
    <property type="match status" value="1"/>
</dbReference>
<dbReference type="SMART" id="SM01188">
    <property type="entry name" value="ELK"/>
    <property type="match status" value="1"/>
</dbReference>
<dbReference type="SMART" id="SM00389">
    <property type="entry name" value="HOX"/>
    <property type="match status" value="1"/>
</dbReference>
<dbReference type="SMART" id="SM01255">
    <property type="entry name" value="KNOX1"/>
    <property type="match status" value="1"/>
</dbReference>
<dbReference type="SMART" id="SM01256">
    <property type="entry name" value="KNOX2"/>
    <property type="match status" value="1"/>
</dbReference>
<dbReference type="SUPFAM" id="SSF46689">
    <property type="entry name" value="Homeodomain-like"/>
    <property type="match status" value="1"/>
</dbReference>
<dbReference type="PROSITE" id="PS51213">
    <property type="entry name" value="ELK"/>
    <property type="match status" value="1"/>
</dbReference>
<dbReference type="PROSITE" id="PS00027">
    <property type="entry name" value="HOMEOBOX_1"/>
    <property type="match status" value="1"/>
</dbReference>
<dbReference type="PROSITE" id="PS50071">
    <property type="entry name" value="HOMEOBOX_2"/>
    <property type="match status" value="1"/>
</dbReference>
<protein>
    <recommendedName>
        <fullName>Homeobox protein knotted-1-like 6</fullName>
    </recommendedName>
    <alternativeName>
        <fullName>Protein KNAT6</fullName>
    </alternativeName>
</protein>
<keyword id="KW-0025">Alternative splicing</keyword>
<keyword id="KW-0238">DNA-binding</keyword>
<keyword id="KW-0371">Homeobox</keyword>
<keyword id="KW-0539">Nucleus</keyword>
<keyword id="KW-1185">Reference proteome</keyword>
<comment type="function">
    <text evidence="6">Plays a role in meristem function. Contributes to the shoot apical meristem (SAM) maintenance and organ separation by controlling boundary establishment in embryo in a CUC1, CUC2 and STM-dependent manner. Involved in maintaining cells in an undifferentiated, meristematic state. Probably binds to the DNA sequence 5'-TGAC-3'.</text>
</comment>
<comment type="subunit">
    <text evidence="4 5">May form heterodimeric complex with the TALE/BELL protein BLH9/PNY. Interacts with OFP2 and OFP4.</text>
</comment>
<comment type="interaction">
    <interactant intactId="EBI-530499">
        <id>Q84JS6</id>
    </interactant>
    <interactant intactId="EBI-1148379">
        <id>Q9SJ56</id>
        <label>BLH1</label>
    </interactant>
    <organismsDiffer>false</organismsDiffer>
    <experiments>3</experiments>
</comment>
<comment type="interaction">
    <interactant intactId="EBI-530499">
        <id>Q84JS6</id>
    </interactant>
    <interactant intactId="EBI-1153895">
        <id>Q9FXG8</id>
        <label>BLH10</label>
    </interactant>
    <organismsDiffer>false</organismsDiffer>
    <experiments>4</experiments>
</comment>
<comment type="interaction">
    <interactant intactId="EBI-530499">
        <id>Q84JS6</id>
    </interactant>
    <interactant intactId="EBI-1153992">
        <id>Q8S897</id>
        <label>BLH5</label>
    </interactant>
    <organismsDiffer>false</organismsDiffer>
    <experiments>3</experiments>
</comment>
<comment type="interaction">
    <interactant intactId="EBI-530499">
        <id>Q84JS6</id>
    </interactant>
    <interactant intactId="EBI-1153881">
        <id>O65685</id>
        <label>BLH6</label>
    </interactant>
    <organismsDiffer>false</organismsDiffer>
    <experiments>3</experiments>
</comment>
<comment type="interaction">
    <interactant intactId="EBI-530499">
        <id>Q84JS6</id>
    </interactant>
    <interactant intactId="EBI-1153967">
        <id>Q9SIW1</id>
        <label>BLH7</label>
    </interactant>
    <organismsDiffer>false</organismsDiffer>
    <experiments>3</experiments>
</comment>
<comment type="interaction">
    <interactant intactId="EBI-530499">
        <id>Q84JS6</id>
    </interactant>
    <interactant intactId="EBI-530473">
        <id>Q9LZM8</id>
        <label>BLH9</label>
    </interactant>
    <organismsDiffer>false</organismsDiffer>
    <experiments>6</experiments>
</comment>
<comment type="subcellular location">
    <subcellularLocation>
        <location evidence="8">Nucleus</location>
    </subcellularLocation>
</comment>
<comment type="alternative products">
    <event type="alternative splicing"/>
    <isoform>
        <id>Q84JS6-1</id>
        <name>KNAT6S</name>
        <name>short</name>
        <sequence type="displayed"/>
    </isoform>
    <isoform>
        <id>Q84JS6-2</id>
        <name>KNAT6L</name>
        <name>long</name>
        <sequence type="described" ref="VSP_029601"/>
    </isoform>
</comment>
<comment type="tissue specificity">
    <text evidence="3">Expressed predominantly in shoot apices of seedlings, and, to a lower extent, in rosette leaves.</text>
</comment>
<comment type="developmental stage">
    <text evidence="6">First detected in torpedo stage embryos at the boundaries between the presumptive SAM and the cotyledons. Later expressed between the cotyledons and the meristem, and between the cotyledons. In seedlings, localized in stipules and at the boundaries between the SAM and the emerging primordia. Expressed at the site of lateral roots.</text>
</comment>
<comment type="induction">
    <text evidence="3 6">Seems to be repressed by AS2 and AS1 but induced by STM, CUC1 and CUC2.</text>
</comment>
<comment type="similarity">
    <text evidence="2">Belongs to the TALE/KNOX homeobox family.</text>
</comment>
<comment type="caution">
    <text evidence="8">It is uncertain whether Met-1 or Met-4 is the initiator.</text>
</comment>
<comment type="sequence caution" evidence="8">
    <conflict type="erroneous gene model prediction">
        <sequence resource="EMBL-CDS" id="AAF79598"/>
    </conflict>
</comment>
<comment type="sequence caution" evidence="8">
    <conflict type="erroneous initiation">
        <sequence resource="EMBL-CDS" id="AAF79598"/>
    </conflict>
    <text>Truncated N-terminus.</text>
</comment>
<comment type="sequence caution" evidence="8">
    <conflict type="erroneous initiation">
        <sequence resource="EMBL-CDS" id="AAF87007"/>
    </conflict>
    <text>Truncated N-terminus.</text>
</comment>
<accession>Q84JS6</accession>
<accession>Q948K0</accession>
<accession>Q9LQD4</accession>
<accession>Q9LR21</accession>
<feature type="chain" id="PRO_0000311818" description="Homeobox protein knotted-1-like 6">
    <location>
        <begin position="1"/>
        <end position="327"/>
    </location>
</feature>
<feature type="domain" description="ELK" evidence="2">
    <location>
        <begin position="224"/>
        <end position="244"/>
    </location>
</feature>
<feature type="DNA-binding region" description="Homeobox; TALE-type" evidence="1">
    <location>
        <begin position="245"/>
        <end position="308"/>
    </location>
</feature>
<feature type="splice variant" id="VSP_029601" description="In isoform KNAT6L." evidence="7">
    <original>K</original>
    <variation>KKQ</variation>
    <location>
        <position position="107"/>
    </location>
</feature>